<proteinExistence type="inferred from homology"/>
<evidence type="ECO:0000255" key="1">
    <source>
        <dbReference type="HAMAP-Rule" id="MF_00268"/>
    </source>
</evidence>
<gene>
    <name evidence="1" type="primary">recA</name>
    <name type="ordered locus">RBAM_016780</name>
</gene>
<name>RECA_BACVZ</name>
<comment type="function">
    <text evidence="1">Can catalyze the hydrolysis of ATP in the presence of single-stranded DNA, the ATP-dependent uptake of single-stranded DNA by duplex DNA, and the ATP-dependent hybridization of homologous single-stranded DNAs. It interacts with LexA causing its activation and leading to its autocatalytic cleavage.</text>
</comment>
<comment type="subcellular location">
    <subcellularLocation>
        <location evidence="1">Cytoplasm</location>
    </subcellularLocation>
</comment>
<comment type="similarity">
    <text evidence="1">Belongs to the RecA family.</text>
</comment>
<keyword id="KW-0067">ATP-binding</keyword>
<keyword id="KW-0963">Cytoplasm</keyword>
<keyword id="KW-0227">DNA damage</keyword>
<keyword id="KW-0233">DNA recombination</keyword>
<keyword id="KW-0234">DNA repair</keyword>
<keyword id="KW-0238">DNA-binding</keyword>
<keyword id="KW-0547">Nucleotide-binding</keyword>
<keyword id="KW-0742">SOS response</keyword>
<sequence>MSDRQAALDMALKQIEKQFGKGSIMKLGEKTDTRISTVPSGSLALDTALGIGGYPRGRIIEVYGPESSGKTTVALHAIAEVQEKGGQAAFIDAEHALDPVYAQKLGVNIEELLLSQPDTGEQALEIAEALVRSGAVDIVVVDSVAALVPKAEIEGDMGDSHVGLQARLMSQALRKLSGAINKSKTIAIFINQIREKVGVMFGNPETTPGGRALKFYSSVRLEVRRAEQLKQGNDVMGNKTRIKVVKNKVAPPFRTAEVDIMYGEGISKEGEIIDLGTELDIVQKSGSWYSYEEERLGQGRENAKQFLKENKDIMLMIQEQIREYYGLDNNGVTDKAEEVQEEMELEE</sequence>
<protein>
    <recommendedName>
        <fullName evidence="1">Protein RecA</fullName>
    </recommendedName>
    <alternativeName>
        <fullName evidence="1">Recombinase A</fullName>
    </alternativeName>
</protein>
<reference key="1">
    <citation type="journal article" date="2007" name="Nat. Biotechnol.">
        <title>Comparative analysis of the complete genome sequence of the plant growth-promoting bacterium Bacillus amyloliquefaciens FZB42.</title>
        <authorList>
            <person name="Chen X.H."/>
            <person name="Koumoutsi A."/>
            <person name="Scholz R."/>
            <person name="Eisenreich A."/>
            <person name="Schneider K."/>
            <person name="Heinemeyer I."/>
            <person name="Morgenstern B."/>
            <person name="Voss B."/>
            <person name="Hess W.R."/>
            <person name="Reva O."/>
            <person name="Junge H."/>
            <person name="Voigt B."/>
            <person name="Jungblut P.R."/>
            <person name="Vater J."/>
            <person name="Suessmuth R."/>
            <person name="Liesegang H."/>
            <person name="Strittmatter A."/>
            <person name="Gottschalk G."/>
            <person name="Borriss R."/>
        </authorList>
    </citation>
    <scope>NUCLEOTIDE SEQUENCE [LARGE SCALE GENOMIC DNA]</scope>
    <source>
        <strain>DSM 23117 / BGSC 10A6 / LMG 26770 / FZB42</strain>
    </source>
</reference>
<accession>A7Z4W5</accession>
<dbReference type="EMBL" id="CP000560">
    <property type="protein sequence ID" value="ABS74041.1"/>
    <property type="molecule type" value="Genomic_DNA"/>
</dbReference>
<dbReference type="RefSeq" id="WP_003154145.1">
    <property type="nucleotide sequence ID" value="NC_009725.2"/>
</dbReference>
<dbReference type="SMR" id="A7Z4W5"/>
<dbReference type="GeneID" id="93080811"/>
<dbReference type="KEGG" id="bay:RBAM_016780"/>
<dbReference type="HOGENOM" id="CLU_040469_1_2_9"/>
<dbReference type="Proteomes" id="UP000001120">
    <property type="component" value="Chromosome"/>
</dbReference>
<dbReference type="GO" id="GO:0005829">
    <property type="term" value="C:cytosol"/>
    <property type="evidence" value="ECO:0007669"/>
    <property type="project" value="TreeGrafter"/>
</dbReference>
<dbReference type="GO" id="GO:0005524">
    <property type="term" value="F:ATP binding"/>
    <property type="evidence" value="ECO:0007669"/>
    <property type="project" value="UniProtKB-UniRule"/>
</dbReference>
<dbReference type="GO" id="GO:0016887">
    <property type="term" value="F:ATP hydrolysis activity"/>
    <property type="evidence" value="ECO:0007669"/>
    <property type="project" value="InterPro"/>
</dbReference>
<dbReference type="GO" id="GO:0140664">
    <property type="term" value="F:ATP-dependent DNA damage sensor activity"/>
    <property type="evidence" value="ECO:0007669"/>
    <property type="project" value="InterPro"/>
</dbReference>
<dbReference type="GO" id="GO:0003684">
    <property type="term" value="F:damaged DNA binding"/>
    <property type="evidence" value="ECO:0007669"/>
    <property type="project" value="UniProtKB-UniRule"/>
</dbReference>
<dbReference type="GO" id="GO:0003697">
    <property type="term" value="F:single-stranded DNA binding"/>
    <property type="evidence" value="ECO:0007669"/>
    <property type="project" value="UniProtKB-UniRule"/>
</dbReference>
<dbReference type="GO" id="GO:0006310">
    <property type="term" value="P:DNA recombination"/>
    <property type="evidence" value="ECO:0007669"/>
    <property type="project" value="UniProtKB-UniRule"/>
</dbReference>
<dbReference type="GO" id="GO:0006281">
    <property type="term" value="P:DNA repair"/>
    <property type="evidence" value="ECO:0007669"/>
    <property type="project" value="UniProtKB-UniRule"/>
</dbReference>
<dbReference type="GO" id="GO:0009432">
    <property type="term" value="P:SOS response"/>
    <property type="evidence" value="ECO:0007669"/>
    <property type="project" value="UniProtKB-UniRule"/>
</dbReference>
<dbReference type="CDD" id="cd00983">
    <property type="entry name" value="RecA"/>
    <property type="match status" value="1"/>
</dbReference>
<dbReference type="FunFam" id="3.40.50.300:FF:000087">
    <property type="entry name" value="Recombinase RecA"/>
    <property type="match status" value="1"/>
</dbReference>
<dbReference type="Gene3D" id="3.40.50.300">
    <property type="entry name" value="P-loop containing nucleotide triphosphate hydrolases"/>
    <property type="match status" value="1"/>
</dbReference>
<dbReference type="HAMAP" id="MF_00268">
    <property type="entry name" value="RecA"/>
    <property type="match status" value="1"/>
</dbReference>
<dbReference type="InterPro" id="IPR003593">
    <property type="entry name" value="AAA+_ATPase"/>
</dbReference>
<dbReference type="InterPro" id="IPR013765">
    <property type="entry name" value="DNA_recomb/repair_RecA"/>
</dbReference>
<dbReference type="InterPro" id="IPR020584">
    <property type="entry name" value="DNA_recomb/repair_RecA_CS"/>
</dbReference>
<dbReference type="InterPro" id="IPR027417">
    <property type="entry name" value="P-loop_NTPase"/>
</dbReference>
<dbReference type="InterPro" id="IPR049261">
    <property type="entry name" value="RecA-like_C"/>
</dbReference>
<dbReference type="InterPro" id="IPR049428">
    <property type="entry name" value="RecA-like_N"/>
</dbReference>
<dbReference type="InterPro" id="IPR020588">
    <property type="entry name" value="RecA_ATP-bd"/>
</dbReference>
<dbReference type="InterPro" id="IPR023400">
    <property type="entry name" value="RecA_C_sf"/>
</dbReference>
<dbReference type="InterPro" id="IPR020587">
    <property type="entry name" value="RecA_monomer-monomer_interface"/>
</dbReference>
<dbReference type="NCBIfam" id="TIGR02012">
    <property type="entry name" value="tigrfam_recA"/>
    <property type="match status" value="1"/>
</dbReference>
<dbReference type="PANTHER" id="PTHR45900:SF1">
    <property type="entry name" value="MITOCHONDRIAL DNA REPAIR PROTEIN RECA HOMOLOG-RELATED"/>
    <property type="match status" value="1"/>
</dbReference>
<dbReference type="PANTHER" id="PTHR45900">
    <property type="entry name" value="RECA"/>
    <property type="match status" value="1"/>
</dbReference>
<dbReference type="Pfam" id="PF00154">
    <property type="entry name" value="RecA"/>
    <property type="match status" value="1"/>
</dbReference>
<dbReference type="Pfam" id="PF21096">
    <property type="entry name" value="RecA_C"/>
    <property type="match status" value="1"/>
</dbReference>
<dbReference type="PRINTS" id="PR00142">
    <property type="entry name" value="RECA"/>
</dbReference>
<dbReference type="SMART" id="SM00382">
    <property type="entry name" value="AAA"/>
    <property type="match status" value="1"/>
</dbReference>
<dbReference type="SUPFAM" id="SSF52540">
    <property type="entry name" value="P-loop containing nucleoside triphosphate hydrolases"/>
    <property type="match status" value="1"/>
</dbReference>
<dbReference type="SUPFAM" id="SSF54752">
    <property type="entry name" value="RecA protein, C-terminal domain"/>
    <property type="match status" value="1"/>
</dbReference>
<dbReference type="PROSITE" id="PS00321">
    <property type="entry name" value="RECA_1"/>
    <property type="match status" value="1"/>
</dbReference>
<dbReference type="PROSITE" id="PS50162">
    <property type="entry name" value="RECA_2"/>
    <property type="match status" value="1"/>
</dbReference>
<dbReference type="PROSITE" id="PS50163">
    <property type="entry name" value="RECA_3"/>
    <property type="match status" value="1"/>
</dbReference>
<organism>
    <name type="scientific">Bacillus velezensis (strain DSM 23117 / BGSC 10A6 / LMG 26770 / FZB42)</name>
    <name type="common">Bacillus amyloliquefaciens subsp. plantarum</name>
    <dbReference type="NCBI Taxonomy" id="326423"/>
    <lineage>
        <taxon>Bacteria</taxon>
        <taxon>Bacillati</taxon>
        <taxon>Bacillota</taxon>
        <taxon>Bacilli</taxon>
        <taxon>Bacillales</taxon>
        <taxon>Bacillaceae</taxon>
        <taxon>Bacillus</taxon>
        <taxon>Bacillus amyloliquefaciens group</taxon>
    </lineage>
</organism>
<feature type="chain" id="PRO_1000047888" description="Protein RecA">
    <location>
        <begin position="1"/>
        <end position="347"/>
    </location>
</feature>
<feature type="binding site" evidence="1">
    <location>
        <begin position="64"/>
        <end position="71"/>
    </location>
    <ligand>
        <name>ATP</name>
        <dbReference type="ChEBI" id="CHEBI:30616"/>
    </ligand>
</feature>